<reference key="1">
    <citation type="journal article" date="2007" name="Toxicon">
        <title>From the identification of gene organization of alpha conotoxins to the cloning of novel toxins.</title>
        <authorList>
            <person name="Yuan D.-D."/>
            <person name="Han Y.-H."/>
            <person name="Wang C.-G."/>
            <person name="Chi C.-W."/>
        </authorList>
    </citation>
    <scope>NUCLEOTIDE SEQUENCE [GENOMIC DNA / MRNA]</scope>
    <source>
        <tissue>Venom duct</tissue>
    </source>
</reference>
<sequence length="64" mass="7181">MGMRMMFTLFLLVVLTTTVVSFPSDSASDGRDDEAKDERSDMYKSKRNGRCCHPACGKHFSCGR</sequence>
<accession>P0CAQ5</accession>
<accession>A1X8B5</accession>
<accession>A3DT43</accession>
<accession>A6M932</accession>
<accession>A6M933</accession>
<evidence type="ECO:0000250" key="1"/>
<evidence type="ECO:0000250" key="2">
    <source>
        <dbReference type="UniProtKB" id="P01519"/>
    </source>
</evidence>
<evidence type="ECO:0000255" key="3"/>
<evidence type="ECO:0000256" key="4">
    <source>
        <dbReference type="SAM" id="MobiDB-lite"/>
    </source>
</evidence>
<evidence type="ECO:0000305" key="5"/>
<dbReference type="EMBL" id="DQ359139">
    <property type="protein sequence ID" value="ABD48790.1"/>
    <property type="molecule type" value="mRNA"/>
</dbReference>
<dbReference type="EMBL" id="DQ311055">
    <property type="protein sequence ID" value="ABD33847.1"/>
    <property type="molecule type" value="Genomic_DNA"/>
</dbReference>
<dbReference type="ConoServer" id="545">
    <property type="toxin name" value="Ac1.1b precursor"/>
</dbReference>
<dbReference type="ConoServer" id="571">
    <property type="toxin name" value="Ac1.1b precursor"/>
</dbReference>
<dbReference type="GO" id="GO:0005576">
    <property type="term" value="C:extracellular region"/>
    <property type="evidence" value="ECO:0007669"/>
    <property type="project" value="UniProtKB-SubCell"/>
</dbReference>
<dbReference type="GO" id="GO:0035792">
    <property type="term" value="C:host cell postsynaptic membrane"/>
    <property type="evidence" value="ECO:0007669"/>
    <property type="project" value="UniProtKB-KW"/>
</dbReference>
<dbReference type="GO" id="GO:0030550">
    <property type="term" value="F:acetylcholine receptor inhibitor activity"/>
    <property type="evidence" value="ECO:0007669"/>
    <property type="project" value="UniProtKB-KW"/>
</dbReference>
<dbReference type="GO" id="GO:0099106">
    <property type="term" value="F:ion channel regulator activity"/>
    <property type="evidence" value="ECO:0007669"/>
    <property type="project" value="UniProtKB-KW"/>
</dbReference>
<dbReference type="GO" id="GO:0090729">
    <property type="term" value="F:toxin activity"/>
    <property type="evidence" value="ECO:0007669"/>
    <property type="project" value="UniProtKB-KW"/>
</dbReference>
<dbReference type="InterPro" id="IPR009958">
    <property type="entry name" value="Conotoxin_a-typ"/>
</dbReference>
<dbReference type="InterPro" id="IPR018072">
    <property type="entry name" value="Conotoxin_a-typ_CS"/>
</dbReference>
<dbReference type="Pfam" id="PF07365">
    <property type="entry name" value="Toxin_8"/>
    <property type="match status" value="1"/>
</dbReference>
<dbReference type="PROSITE" id="PS60014">
    <property type="entry name" value="ALPHA_CONOTOXIN"/>
    <property type="match status" value="1"/>
</dbReference>
<proteinExistence type="evidence at transcript level"/>
<keyword id="KW-0008">Acetylcholine receptor inhibiting toxin</keyword>
<keyword id="KW-0027">Amidation</keyword>
<keyword id="KW-0165">Cleavage on pair of basic residues</keyword>
<keyword id="KW-1015">Disulfide bond</keyword>
<keyword id="KW-0872">Ion channel impairing toxin</keyword>
<keyword id="KW-0528">Neurotoxin</keyword>
<keyword id="KW-0629">Postsynaptic neurotoxin</keyword>
<keyword id="KW-0964">Secreted</keyword>
<keyword id="KW-0732">Signal</keyword>
<keyword id="KW-0800">Toxin</keyword>
<protein>
    <recommendedName>
        <fullName>Alpha-conotoxin-like Ac1.1b</fullName>
    </recommendedName>
</protein>
<feature type="signal peptide" evidence="3">
    <location>
        <begin position="1"/>
        <end position="21"/>
    </location>
</feature>
<feature type="propeptide" id="PRO_0000376848" evidence="1">
    <location>
        <begin position="22"/>
        <end position="47"/>
    </location>
</feature>
<feature type="peptide" id="PRO_0000376849" description="Alpha-conotoxin-like Ac1.1b">
    <location>
        <begin position="48"/>
        <end position="62"/>
    </location>
</feature>
<feature type="region of interest" description="Disordered" evidence="4">
    <location>
        <begin position="23"/>
        <end position="46"/>
    </location>
</feature>
<feature type="compositionally biased region" description="Basic and acidic residues" evidence="4">
    <location>
        <begin position="28"/>
        <end position="44"/>
    </location>
</feature>
<feature type="modified residue" description="Cysteine amide" evidence="1">
    <location>
        <position position="62"/>
    </location>
</feature>
<feature type="disulfide bond" evidence="2">
    <location>
        <begin position="51"/>
        <end position="56"/>
    </location>
</feature>
<feature type="disulfide bond" evidence="2">
    <location>
        <begin position="52"/>
        <end position="62"/>
    </location>
</feature>
<feature type="sequence conflict" description="In Ref. 1; ABD33847." evidence="5" ref="1">
    <original>L</original>
    <variation>V</variation>
    <location>
        <position position="9"/>
    </location>
</feature>
<feature type="sequence conflict" description="In Ref. 1; ABD33847." evidence="5" ref="1">
    <original>F</original>
    <variation>Y</variation>
    <location>
        <position position="22"/>
    </location>
</feature>
<feature type="sequence conflict" description="In Ref. 1; ABD33847." evidence="5" ref="1">
    <original>K</original>
    <variation>E</variation>
    <location>
        <position position="44"/>
    </location>
</feature>
<comment type="function">
    <text evidence="1">Alpha-conotoxins act on postsynaptic membranes, they bind to the nicotinic acetylcholine receptors (nAChR) and thus inhibit them.</text>
</comment>
<comment type="subcellular location">
    <subcellularLocation>
        <location evidence="1">Secreted</location>
    </subcellularLocation>
</comment>
<comment type="tissue specificity">
    <text>Expressed by the venom duct.</text>
</comment>
<comment type="domain">
    <text>The cysteine framework is I (CC-C-C). Alpha3/5 pattern.</text>
</comment>
<comment type="similarity">
    <text evidence="5">Belongs to the conotoxin A superfamily.</text>
</comment>
<name>CA11B_CONAH</name>
<organism>
    <name type="scientific">Conus achatinus</name>
    <name type="common">Little frog cone</name>
    <dbReference type="NCBI Taxonomy" id="369967"/>
    <lineage>
        <taxon>Eukaryota</taxon>
        <taxon>Metazoa</taxon>
        <taxon>Spiralia</taxon>
        <taxon>Lophotrochozoa</taxon>
        <taxon>Mollusca</taxon>
        <taxon>Gastropoda</taxon>
        <taxon>Caenogastropoda</taxon>
        <taxon>Neogastropoda</taxon>
        <taxon>Conoidea</taxon>
        <taxon>Conidae</taxon>
        <taxon>Conus</taxon>
        <taxon>Pionoconus</taxon>
    </lineage>
</organism>